<dbReference type="EMBL" id="AP009376">
    <property type="protein sequence ID" value="BAF50682.1"/>
    <property type="molecule type" value="Genomic_DNA"/>
</dbReference>
<dbReference type="EMBL" id="AP009376">
    <property type="protein sequence ID" value="BAF50701.1"/>
    <property type="molecule type" value="Genomic_DNA"/>
</dbReference>
<dbReference type="GO" id="GO:0009507">
    <property type="term" value="C:chloroplast"/>
    <property type="evidence" value="ECO:0007669"/>
    <property type="project" value="UniProtKB-SubCell"/>
</dbReference>
<dbReference type="InterPro" id="IPR019645">
    <property type="entry name" value="Uncharacterised_Ycf15"/>
</dbReference>
<dbReference type="Pfam" id="PF10705">
    <property type="entry name" value="Ycf15"/>
    <property type="match status" value="1"/>
</dbReference>
<sequence>MLLLKHGRIEILDQNTMDGWYELPKQEFLNSEQPELLLTTSKKFPLMKDGNPLENQKYAGRMKLLLLSVPITNQLNN</sequence>
<proteinExistence type="uncertain"/>
<accession>A4QLX7</accession>
<geneLocation type="chloroplast"/>
<protein>
    <recommendedName>
        <fullName>Putative uncharacterized protein ycf15</fullName>
    </recommendedName>
    <alternativeName>
        <fullName>Orf77</fullName>
    </alternativeName>
</protein>
<gene>
    <name type="primary">ycf15-A</name>
</gene>
<gene>
    <name type="primary">ycf15-B</name>
</gene>
<feature type="chain" id="PRO_0000360390" description="Putative uncharacterized protein ycf15">
    <location>
        <begin position="1"/>
        <end position="77"/>
    </location>
</feature>
<evidence type="ECO:0000305" key="1"/>
<comment type="subcellular location">
    <subcellularLocation>
        <location>Plastid</location>
        <location>Chloroplast</location>
    </subcellularLocation>
</comment>
<comment type="similarity">
    <text evidence="1">Belongs to the ycf15 family.</text>
</comment>
<comment type="caution">
    <text evidence="1">Could be the product of a pseudogene.</text>
</comment>
<organism>
    <name type="scientific">Nasturtium officinale</name>
    <name type="common">Watercress</name>
    <name type="synonym">Rorippa nasturtium-aquaticum</name>
    <dbReference type="NCBI Taxonomy" id="65948"/>
    <lineage>
        <taxon>Eukaryota</taxon>
        <taxon>Viridiplantae</taxon>
        <taxon>Streptophyta</taxon>
        <taxon>Embryophyta</taxon>
        <taxon>Tracheophyta</taxon>
        <taxon>Spermatophyta</taxon>
        <taxon>Magnoliopsida</taxon>
        <taxon>eudicotyledons</taxon>
        <taxon>Gunneridae</taxon>
        <taxon>Pentapetalae</taxon>
        <taxon>rosids</taxon>
        <taxon>malvids</taxon>
        <taxon>Brassicales</taxon>
        <taxon>Brassicaceae</taxon>
        <taxon>Cardamineae</taxon>
        <taxon>Nasturtium</taxon>
    </lineage>
</organism>
<reference key="1">
    <citation type="submission" date="2007-03" db="EMBL/GenBank/DDBJ databases">
        <title>Sequencing analysis of Nasturtium officinale chloroplast DNA.</title>
        <authorList>
            <person name="Hosouchi T."/>
            <person name="Tsuruoka H."/>
            <person name="Kotani H."/>
        </authorList>
    </citation>
    <scope>NUCLEOTIDE SEQUENCE [LARGE SCALE GENOMIC DNA]</scope>
</reference>
<name>YCF15_NASOF</name>
<keyword id="KW-0150">Chloroplast</keyword>
<keyword id="KW-0934">Plastid</keyword>